<keyword id="KW-1015">Disulfide bond</keyword>
<keyword id="KW-0413">Isomerase</keyword>
<keyword id="KW-0676">Redox-active center</keyword>
<keyword id="KW-1185">Reference proteome</keyword>
<keyword id="KW-0677">Repeat</keyword>
<keyword id="KW-0964">Secreted</keyword>
<keyword id="KW-0732">Signal</keyword>
<comment type="function">
    <text evidence="1">Acts as a protein-folding catalyst that interacts with nascent polypeptides to catalyze the formation, isomerization, and reduction or oxidation of disulfide bonds. May play a role in storage protein biogenesis (By similarity).</text>
</comment>
<comment type="catalytic activity">
    <reaction>
        <text>Catalyzes the rearrangement of -S-S- bonds in proteins.</text>
        <dbReference type="EC" id="5.3.4.1"/>
    </reaction>
</comment>
<comment type="subcellular location">
    <subcellularLocation>
        <location evidence="4">Secreted</location>
    </subcellularLocation>
</comment>
<comment type="similarity">
    <text evidence="4">Belongs to the protein disulfide isomerase family.</text>
</comment>
<proteinExistence type="evidence at transcript level"/>
<dbReference type="EC" id="5.3.4.1"/>
<dbReference type="EMBL" id="AP003331">
    <property type="protein sequence ID" value="BAB67990.1"/>
    <property type="molecule type" value="Genomic_DNA"/>
</dbReference>
<dbReference type="EMBL" id="AP008207">
    <property type="protein sequence ID" value="BAF04863.1"/>
    <property type="molecule type" value="Genomic_DNA"/>
</dbReference>
<dbReference type="EMBL" id="AP014957">
    <property type="protein sequence ID" value="BAS71966.1"/>
    <property type="molecule type" value="Genomic_DNA"/>
</dbReference>
<dbReference type="EMBL" id="CM000138">
    <property type="protein sequence ID" value="EAZ11750.1"/>
    <property type="molecule type" value="Genomic_DNA"/>
</dbReference>
<dbReference type="EMBL" id="AK066111">
    <property type="protein sequence ID" value="BAG89827.1"/>
    <property type="molecule type" value="mRNA"/>
</dbReference>
<dbReference type="RefSeq" id="XP_015622515.1">
    <property type="nucleotide sequence ID" value="XM_015767029.1"/>
</dbReference>
<dbReference type="SMR" id="Q942L2"/>
<dbReference type="FunCoup" id="Q942L2">
    <property type="interactions" value="1459"/>
</dbReference>
<dbReference type="STRING" id="39947.Q942L2"/>
<dbReference type="PaxDb" id="39947-Q942L2"/>
<dbReference type="EnsemblPlants" id="Os01t0339900-01">
    <property type="protein sequence ID" value="Os01t0339900-01"/>
    <property type="gene ID" value="Os01g0339900"/>
</dbReference>
<dbReference type="Gramene" id="Os01t0339900-01">
    <property type="protein sequence ID" value="Os01t0339900-01"/>
    <property type="gene ID" value="Os01g0339900"/>
</dbReference>
<dbReference type="KEGG" id="dosa:Os01g0339900"/>
<dbReference type="eggNOG" id="KOG0191">
    <property type="taxonomic scope" value="Eukaryota"/>
</dbReference>
<dbReference type="HOGENOM" id="CLU_038617_1_0_1"/>
<dbReference type="InParanoid" id="Q942L2"/>
<dbReference type="OMA" id="WCRHCKK"/>
<dbReference type="OrthoDB" id="10264505at2759"/>
<dbReference type="Proteomes" id="UP000000763">
    <property type="component" value="Chromosome 1"/>
</dbReference>
<dbReference type="Proteomes" id="UP000007752">
    <property type="component" value="Chromosome 1"/>
</dbReference>
<dbReference type="Proteomes" id="UP000059680">
    <property type="component" value="Chromosome 1"/>
</dbReference>
<dbReference type="GO" id="GO:0005783">
    <property type="term" value="C:endoplasmic reticulum"/>
    <property type="evidence" value="ECO:0000318"/>
    <property type="project" value="GO_Central"/>
</dbReference>
<dbReference type="GO" id="GO:0005576">
    <property type="term" value="C:extracellular region"/>
    <property type="evidence" value="ECO:0007669"/>
    <property type="project" value="UniProtKB-SubCell"/>
</dbReference>
<dbReference type="GO" id="GO:0003756">
    <property type="term" value="F:protein disulfide isomerase activity"/>
    <property type="evidence" value="ECO:0000318"/>
    <property type="project" value="GO_Central"/>
</dbReference>
<dbReference type="GO" id="GO:0006457">
    <property type="term" value="P:protein folding"/>
    <property type="evidence" value="ECO:0000318"/>
    <property type="project" value="GO_Central"/>
</dbReference>
<dbReference type="CDD" id="cd00238">
    <property type="entry name" value="ERp29c"/>
    <property type="match status" value="1"/>
</dbReference>
<dbReference type="CDD" id="cd02998">
    <property type="entry name" value="PDI_a_ERp38"/>
    <property type="match status" value="2"/>
</dbReference>
<dbReference type="FunFam" id="3.40.30.10:FF:000032">
    <property type="entry name" value="Protein disulfide-isomerase A6 homolog"/>
    <property type="match status" value="2"/>
</dbReference>
<dbReference type="Gene3D" id="1.20.1150.12">
    <property type="entry name" value="Endoplasmic reticulum resident protein 29, C-terminal domain"/>
    <property type="match status" value="1"/>
</dbReference>
<dbReference type="Gene3D" id="3.40.30.10">
    <property type="entry name" value="Glutaredoxin"/>
    <property type="match status" value="2"/>
</dbReference>
<dbReference type="InterPro" id="IPR011679">
    <property type="entry name" value="ERp29_C"/>
</dbReference>
<dbReference type="InterPro" id="IPR036356">
    <property type="entry name" value="ERp29_C_sf"/>
</dbReference>
<dbReference type="InterPro" id="IPR051063">
    <property type="entry name" value="PDI"/>
</dbReference>
<dbReference type="InterPro" id="IPR005788">
    <property type="entry name" value="PDI_thioredoxin-like_dom"/>
</dbReference>
<dbReference type="InterPro" id="IPR036249">
    <property type="entry name" value="Thioredoxin-like_sf"/>
</dbReference>
<dbReference type="InterPro" id="IPR017937">
    <property type="entry name" value="Thioredoxin_CS"/>
</dbReference>
<dbReference type="InterPro" id="IPR013766">
    <property type="entry name" value="Thioredoxin_domain"/>
</dbReference>
<dbReference type="NCBIfam" id="TIGR01126">
    <property type="entry name" value="pdi_dom"/>
    <property type="match status" value="2"/>
</dbReference>
<dbReference type="PANTHER" id="PTHR45672:SF11">
    <property type="entry name" value="PROTEIN DISULFIDE-ISOMERASE C17H9.14C"/>
    <property type="match status" value="1"/>
</dbReference>
<dbReference type="PANTHER" id="PTHR45672">
    <property type="entry name" value="PROTEIN DISULFIDE-ISOMERASE C17H9.14C-RELATED"/>
    <property type="match status" value="1"/>
</dbReference>
<dbReference type="Pfam" id="PF07749">
    <property type="entry name" value="ERp29"/>
    <property type="match status" value="1"/>
</dbReference>
<dbReference type="Pfam" id="PF00085">
    <property type="entry name" value="Thioredoxin"/>
    <property type="match status" value="2"/>
</dbReference>
<dbReference type="PRINTS" id="PR00421">
    <property type="entry name" value="THIOREDOXIN"/>
</dbReference>
<dbReference type="SUPFAM" id="SSF47933">
    <property type="entry name" value="ERP29 C domain-like"/>
    <property type="match status" value="1"/>
</dbReference>
<dbReference type="SUPFAM" id="SSF52833">
    <property type="entry name" value="Thioredoxin-like"/>
    <property type="match status" value="2"/>
</dbReference>
<dbReference type="PROSITE" id="PS00194">
    <property type="entry name" value="THIOREDOXIN_1"/>
    <property type="match status" value="2"/>
</dbReference>
<dbReference type="PROSITE" id="PS51352">
    <property type="entry name" value="THIOREDOXIN_2"/>
    <property type="match status" value="2"/>
</dbReference>
<evidence type="ECO:0000250" key="1"/>
<evidence type="ECO:0000255" key="2"/>
<evidence type="ECO:0000255" key="3">
    <source>
        <dbReference type="PROSITE-ProRule" id="PRU00691"/>
    </source>
</evidence>
<evidence type="ECO:0000305" key="4"/>
<reference key="1">
    <citation type="journal article" date="2002" name="Nature">
        <title>The genome sequence and structure of rice chromosome 1.</title>
        <authorList>
            <person name="Sasaki T."/>
            <person name="Matsumoto T."/>
            <person name="Yamamoto K."/>
            <person name="Sakata K."/>
            <person name="Baba T."/>
            <person name="Katayose Y."/>
            <person name="Wu J."/>
            <person name="Niimura Y."/>
            <person name="Cheng Z."/>
            <person name="Nagamura Y."/>
            <person name="Antonio B.A."/>
            <person name="Kanamori H."/>
            <person name="Hosokawa S."/>
            <person name="Masukawa M."/>
            <person name="Arikawa K."/>
            <person name="Chiden Y."/>
            <person name="Hayashi M."/>
            <person name="Okamoto M."/>
            <person name="Ando T."/>
            <person name="Aoki H."/>
            <person name="Arita K."/>
            <person name="Hamada M."/>
            <person name="Harada C."/>
            <person name="Hijishita S."/>
            <person name="Honda M."/>
            <person name="Ichikawa Y."/>
            <person name="Idonuma A."/>
            <person name="Iijima M."/>
            <person name="Ikeda M."/>
            <person name="Ikeno M."/>
            <person name="Ito S."/>
            <person name="Ito T."/>
            <person name="Ito Y."/>
            <person name="Ito Y."/>
            <person name="Iwabuchi A."/>
            <person name="Kamiya K."/>
            <person name="Karasawa W."/>
            <person name="Katagiri S."/>
            <person name="Kikuta A."/>
            <person name="Kobayashi N."/>
            <person name="Kono I."/>
            <person name="Machita K."/>
            <person name="Maehara T."/>
            <person name="Mizuno H."/>
            <person name="Mizubayashi T."/>
            <person name="Mukai Y."/>
            <person name="Nagasaki H."/>
            <person name="Nakashima M."/>
            <person name="Nakama Y."/>
            <person name="Nakamichi Y."/>
            <person name="Nakamura M."/>
            <person name="Namiki N."/>
            <person name="Negishi M."/>
            <person name="Ohta I."/>
            <person name="Ono N."/>
            <person name="Saji S."/>
            <person name="Sakai K."/>
            <person name="Shibata M."/>
            <person name="Shimokawa T."/>
            <person name="Shomura A."/>
            <person name="Song J."/>
            <person name="Takazaki Y."/>
            <person name="Terasawa K."/>
            <person name="Tsuji K."/>
            <person name="Waki K."/>
            <person name="Yamagata H."/>
            <person name="Yamane H."/>
            <person name="Yoshiki S."/>
            <person name="Yoshihara R."/>
            <person name="Yukawa K."/>
            <person name="Zhong H."/>
            <person name="Iwama H."/>
            <person name="Endo T."/>
            <person name="Ito H."/>
            <person name="Hahn J.H."/>
            <person name="Kim H.-I."/>
            <person name="Eun M.-Y."/>
            <person name="Yano M."/>
            <person name="Jiang J."/>
            <person name="Gojobori T."/>
        </authorList>
    </citation>
    <scope>NUCLEOTIDE SEQUENCE [LARGE SCALE GENOMIC DNA]</scope>
    <source>
        <strain>cv. Nipponbare</strain>
    </source>
</reference>
<reference key="2">
    <citation type="journal article" date="2005" name="Nature">
        <title>The map-based sequence of the rice genome.</title>
        <authorList>
            <consortium name="International rice genome sequencing project (IRGSP)"/>
        </authorList>
    </citation>
    <scope>NUCLEOTIDE SEQUENCE [LARGE SCALE GENOMIC DNA]</scope>
    <source>
        <strain>cv. Nipponbare</strain>
    </source>
</reference>
<reference key="3">
    <citation type="journal article" date="2008" name="Nucleic Acids Res.">
        <title>The rice annotation project database (RAP-DB): 2008 update.</title>
        <authorList>
            <consortium name="The rice annotation project (RAP)"/>
        </authorList>
    </citation>
    <scope>GENOME REANNOTATION</scope>
    <source>
        <strain>cv. Nipponbare</strain>
    </source>
</reference>
<reference key="4">
    <citation type="journal article" date="2013" name="Rice">
        <title>Improvement of the Oryza sativa Nipponbare reference genome using next generation sequence and optical map data.</title>
        <authorList>
            <person name="Kawahara Y."/>
            <person name="de la Bastide M."/>
            <person name="Hamilton J.P."/>
            <person name="Kanamori H."/>
            <person name="McCombie W.R."/>
            <person name="Ouyang S."/>
            <person name="Schwartz D.C."/>
            <person name="Tanaka T."/>
            <person name="Wu J."/>
            <person name="Zhou S."/>
            <person name="Childs K.L."/>
            <person name="Davidson R.M."/>
            <person name="Lin H."/>
            <person name="Quesada-Ocampo L."/>
            <person name="Vaillancourt B."/>
            <person name="Sakai H."/>
            <person name="Lee S.S."/>
            <person name="Kim J."/>
            <person name="Numa H."/>
            <person name="Itoh T."/>
            <person name="Buell C.R."/>
            <person name="Matsumoto T."/>
        </authorList>
    </citation>
    <scope>GENOME REANNOTATION</scope>
    <source>
        <strain>cv. Nipponbare</strain>
    </source>
</reference>
<reference key="5">
    <citation type="journal article" date="2005" name="PLoS Biol.">
        <title>The genomes of Oryza sativa: a history of duplications.</title>
        <authorList>
            <person name="Yu J."/>
            <person name="Wang J."/>
            <person name="Lin W."/>
            <person name="Li S."/>
            <person name="Li H."/>
            <person name="Zhou J."/>
            <person name="Ni P."/>
            <person name="Dong W."/>
            <person name="Hu S."/>
            <person name="Zeng C."/>
            <person name="Zhang J."/>
            <person name="Zhang Y."/>
            <person name="Li R."/>
            <person name="Xu Z."/>
            <person name="Li S."/>
            <person name="Li X."/>
            <person name="Zheng H."/>
            <person name="Cong L."/>
            <person name="Lin L."/>
            <person name="Yin J."/>
            <person name="Geng J."/>
            <person name="Li G."/>
            <person name="Shi J."/>
            <person name="Liu J."/>
            <person name="Lv H."/>
            <person name="Li J."/>
            <person name="Wang J."/>
            <person name="Deng Y."/>
            <person name="Ran L."/>
            <person name="Shi X."/>
            <person name="Wang X."/>
            <person name="Wu Q."/>
            <person name="Li C."/>
            <person name="Ren X."/>
            <person name="Wang J."/>
            <person name="Wang X."/>
            <person name="Li D."/>
            <person name="Liu D."/>
            <person name="Zhang X."/>
            <person name="Ji Z."/>
            <person name="Zhao W."/>
            <person name="Sun Y."/>
            <person name="Zhang Z."/>
            <person name="Bao J."/>
            <person name="Han Y."/>
            <person name="Dong L."/>
            <person name="Ji J."/>
            <person name="Chen P."/>
            <person name="Wu S."/>
            <person name="Liu J."/>
            <person name="Xiao Y."/>
            <person name="Bu D."/>
            <person name="Tan J."/>
            <person name="Yang L."/>
            <person name="Ye C."/>
            <person name="Zhang J."/>
            <person name="Xu J."/>
            <person name="Zhou Y."/>
            <person name="Yu Y."/>
            <person name="Zhang B."/>
            <person name="Zhuang S."/>
            <person name="Wei H."/>
            <person name="Liu B."/>
            <person name="Lei M."/>
            <person name="Yu H."/>
            <person name="Li Y."/>
            <person name="Xu H."/>
            <person name="Wei S."/>
            <person name="He X."/>
            <person name="Fang L."/>
            <person name="Zhang Z."/>
            <person name="Zhang Y."/>
            <person name="Huang X."/>
            <person name="Su Z."/>
            <person name="Tong W."/>
            <person name="Li J."/>
            <person name="Tong Z."/>
            <person name="Li S."/>
            <person name="Ye J."/>
            <person name="Wang L."/>
            <person name="Fang L."/>
            <person name="Lei T."/>
            <person name="Chen C.-S."/>
            <person name="Chen H.-C."/>
            <person name="Xu Z."/>
            <person name="Li H."/>
            <person name="Huang H."/>
            <person name="Zhang F."/>
            <person name="Xu H."/>
            <person name="Li N."/>
            <person name="Zhao C."/>
            <person name="Li S."/>
            <person name="Dong L."/>
            <person name="Huang Y."/>
            <person name="Li L."/>
            <person name="Xi Y."/>
            <person name="Qi Q."/>
            <person name="Li W."/>
            <person name="Zhang B."/>
            <person name="Hu W."/>
            <person name="Zhang Y."/>
            <person name="Tian X."/>
            <person name="Jiao Y."/>
            <person name="Liang X."/>
            <person name="Jin J."/>
            <person name="Gao L."/>
            <person name="Zheng W."/>
            <person name="Hao B."/>
            <person name="Liu S.-M."/>
            <person name="Wang W."/>
            <person name="Yuan L."/>
            <person name="Cao M."/>
            <person name="McDermott J."/>
            <person name="Samudrala R."/>
            <person name="Wang J."/>
            <person name="Wong G.K.-S."/>
            <person name="Yang H."/>
        </authorList>
    </citation>
    <scope>NUCLEOTIDE SEQUENCE [LARGE SCALE GENOMIC DNA]</scope>
    <source>
        <strain>cv. Nipponbare</strain>
    </source>
</reference>
<reference key="6">
    <citation type="journal article" date="2003" name="Science">
        <title>Collection, mapping, and annotation of over 28,000 cDNA clones from japonica rice.</title>
        <authorList>
            <consortium name="The rice full-length cDNA consortium"/>
        </authorList>
    </citation>
    <scope>NUCLEOTIDE SEQUENCE [LARGE SCALE MRNA]</scope>
    <source>
        <strain>cv. Nipponbare</strain>
    </source>
</reference>
<reference key="7">
    <citation type="journal article" date="2005" name="Plant Physiol.">
        <title>Phylogenetic analyses identify 10 classes of the protein disulfide isomerase family in plants, including single-domain protein disulfide isomerase-related proteins.</title>
        <authorList>
            <person name="Houston N.L."/>
            <person name="Fan C."/>
            <person name="Xiang J.Q."/>
            <person name="Schulze J.M."/>
            <person name="Jung R."/>
            <person name="Boston R.S."/>
        </authorList>
    </citation>
    <scope>GENE FAMILY</scope>
    <scope>NOMENCLATURE</scope>
</reference>
<reference key="8">
    <citation type="journal article" date="2010" name="BMC Plant Biol.">
        <title>The protein disulfide isomerase gene family in bread wheat (T. aestivum L.).</title>
        <authorList>
            <person name="d'Aloisio E."/>
            <person name="Paolacci A.R."/>
            <person name="Dhanapal A.P."/>
            <person name="Tanzarella O.A."/>
            <person name="Porceddu E."/>
            <person name="Ciaffi M."/>
        </authorList>
    </citation>
    <scope>GENE FAMILY</scope>
    <scope>NOMENCLATURE</scope>
</reference>
<organism>
    <name type="scientific">Oryza sativa subsp. japonica</name>
    <name type="common">Rice</name>
    <dbReference type="NCBI Taxonomy" id="39947"/>
    <lineage>
        <taxon>Eukaryota</taxon>
        <taxon>Viridiplantae</taxon>
        <taxon>Streptophyta</taxon>
        <taxon>Embryophyta</taxon>
        <taxon>Tracheophyta</taxon>
        <taxon>Spermatophyta</taxon>
        <taxon>Magnoliopsida</taxon>
        <taxon>Liliopsida</taxon>
        <taxon>Poales</taxon>
        <taxon>Poaceae</taxon>
        <taxon>BOP clade</taxon>
        <taxon>Oryzoideae</taxon>
        <taxon>Oryzeae</taxon>
        <taxon>Oryzinae</taxon>
        <taxon>Oryza</taxon>
        <taxon>Oryza sativa</taxon>
    </lineage>
</organism>
<feature type="signal peptide" evidence="2">
    <location>
        <begin position="1"/>
        <end position="27"/>
    </location>
</feature>
<feature type="chain" id="PRO_0000400034" description="Protein disulfide isomerase-like 2-2">
    <location>
        <begin position="28"/>
        <end position="371"/>
    </location>
</feature>
<feature type="domain" description="Thioredoxin 1" evidence="3">
    <location>
        <begin position="28"/>
        <end position="143"/>
    </location>
</feature>
<feature type="domain" description="Thioredoxin 2" evidence="3">
    <location>
        <begin position="147"/>
        <end position="262"/>
    </location>
</feature>
<feature type="active site" description="Nucleophile" evidence="1">
    <location>
        <position position="64"/>
    </location>
</feature>
<feature type="active site" description="Nucleophile" evidence="1">
    <location>
        <position position="67"/>
    </location>
</feature>
<feature type="active site" description="Nucleophile" evidence="1">
    <location>
        <position position="183"/>
    </location>
</feature>
<feature type="active site" description="Nucleophile" evidence="1">
    <location>
        <position position="186"/>
    </location>
</feature>
<feature type="site" description="Contributes to redox potential value" evidence="1">
    <location>
        <position position="65"/>
    </location>
</feature>
<feature type="site" description="Contributes to redox potential value" evidence="1">
    <location>
        <position position="66"/>
    </location>
</feature>
<feature type="site" description="Lowers pKa of C-terminal Cys of first active site" evidence="1">
    <location>
        <position position="129"/>
    </location>
</feature>
<feature type="site" description="Contributes to redox potential value" evidence="1">
    <location>
        <position position="184"/>
    </location>
</feature>
<feature type="site" description="Contributes to redox potential value" evidence="1">
    <location>
        <position position="185"/>
    </location>
</feature>
<feature type="site" description="Lowers pKa of C-terminal Cys of second active site" evidence="1">
    <location>
        <position position="248"/>
    </location>
</feature>
<feature type="disulfide bond" description="Redox-active" evidence="3">
    <location>
        <begin position="64"/>
        <end position="67"/>
    </location>
</feature>
<feature type="disulfide bond" description="Redox-active" evidence="3">
    <location>
        <begin position="183"/>
        <end position="186"/>
    </location>
</feature>
<protein>
    <recommendedName>
        <fullName>Protein disulfide isomerase-like 2-2</fullName>
        <shortName>OsPDIL2-2</shortName>
        <ecNumber>5.3.4.1</ecNumber>
    </recommendedName>
    <alternativeName>
        <fullName>Protein disulfide isomerase-like 4-2</fullName>
        <shortName>OsPDIL4-2</shortName>
    </alternativeName>
</protein>
<accession>Q942L2</accession>
<accession>A0A0P0V205</accession>
<name>PDI22_ORYSJ</name>
<sequence>MAIPRISPRKTLPLFAALALALAWAFAAPAFADGDDVVALTESTFEKEVGQDRGALVEFYAPWCGHCKKLAPEYEKLGASFKKAKSVFIAKVDCDEHKSVCSKYGVSGYPTIQWFPKGSLEPKKYEGQRSAEALAEFVNTEGGTNVKLATIPSSVVVLGPDNFDSIVLDENKDILVEFYAPWCGHCKHLAPIYEKLASVYKLDDGVVIANLDADKHKDLAEKYGVSGYPTLKFFPKGNKAGEDYDGGRELDDFVKFINEKCGTSRDTKGQLTSEAGRIASLDALAKEFLGAANDKRKEILSNMEEEVVKLSGSAAKHGKVYIAIAKKILDKGHDYTKKETERLERMLEKSISPSKADEFIIKKNVLSTFSS</sequence>
<gene>
    <name type="primary">PDIL2-2</name>
    <name type="synonym">PDIL4-2</name>
    <name type="ordered locus">Os01g0339900</name>
    <name type="ordered locus">LOC_Os01g23740</name>
    <name type="ORF">B1088D01.21</name>
    <name type="ORF">OsJ_01619</name>
</gene>